<name>NLP7_ARATH</name>
<protein>
    <recommendedName>
        <fullName>Protein NLP7</fullName>
        <shortName>AtNLP7</shortName>
    </recommendedName>
    <alternativeName>
        <fullName>NIN-like protein 7</fullName>
    </alternativeName>
    <alternativeName>
        <fullName>Nodule inception protein-like protein 7</fullName>
    </alternativeName>
</protein>
<organism>
    <name type="scientific">Arabidopsis thaliana</name>
    <name type="common">Mouse-ear cress</name>
    <dbReference type="NCBI Taxonomy" id="3702"/>
    <lineage>
        <taxon>Eukaryota</taxon>
        <taxon>Viridiplantae</taxon>
        <taxon>Streptophyta</taxon>
        <taxon>Embryophyta</taxon>
        <taxon>Tracheophyta</taxon>
        <taxon>Spermatophyta</taxon>
        <taxon>Magnoliopsida</taxon>
        <taxon>eudicotyledons</taxon>
        <taxon>Gunneridae</taxon>
        <taxon>Pentapetalae</taxon>
        <taxon>rosids</taxon>
        <taxon>malvids</taxon>
        <taxon>Brassicales</taxon>
        <taxon>Brassicaceae</taxon>
        <taxon>Camelineae</taxon>
        <taxon>Arabidopsis</taxon>
    </lineage>
</organism>
<accession>Q84TH9</accession>
<accession>O22987</accession>
<evidence type="ECO:0000255" key="1"/>
<evidence type="ECO:0000255" key="2">
    <source>
        <dbReference type="PROSITE-ProRule" id="PRU00852"/>
    </source>
</evidence>
<evidence type="ECO:0000255" key="3">
    <source>
        <dbReference type="PROSITE-ProRule" id="PRU01081"/>
    </source>
</evidence>
<evidence type="ECO:0000256" key="4">
    <source>
        <dbReference type="SAM" id="MobiDB-lite"/>
    </source>
</evidence>
<evidence type="ECO:0000269" key="5">
    <source>
    </source>
</evidence>
<evidence type="ECO:0000269" key="6">
    <source>
    </source>
</evidence>
<evidence type="ECO:0000269" key="7">
    <source>
    </source>
</evidence>
<evidence type="ECO:0000305" key="8"/>
<dbReference type="EMBL" id="AC002343">
    <property type="protein sequence ID" value="AAB63621.1"/>
    <property type="molecule type" value="Genomic_DNA"/>
</dbReference>
<dbReference type="EMBL" id="AL109619">
    <property type="protein sequence ID" value="CAB51645.1"/>
    <property type="molecule type" value="Genomic_DNA"/>
</dbReference>
<dbReference type="EMBL" id="AL161560">
    <property type="protein sequence ID" value="CAB81320.1"/>
    <property type="molecule type" value="Genomic_DNA"/>
</dbReference>
<dbReference type="EMBL" id="CP002687">
    <property type="protein sequence ID" value="AEE84841.1"/>
    <property type="molecule type" value="Genomic_DNA"/>
</dbReference>
<dbReference type="EMBL" id="BT005776">
    <property type="protein sequence ID" value="AAO64180.1"/>
    <property type="molecule type" value="mRNA"/>
</dbReference>
<dbReference type="EMBL" id="AK228452">
    <property type="protein sequence ID" value="BAF00379.1"/>
    <property type="molecule type" value="mRNA"/>
</dbReference>
<dbReference type="PIR" id="E85276">
    <property type="entry name" value="E85276"/>
</dbReference>
<dbReference type="PIR" id="T08921">
    <property type="entry name" value="T08921"/>
</dbReference>
<dbReference type="RefSeq" id="NP_194133.1">
    <property type="nucleotide sequence ID" value="NM_118534.6"/>
</dbReference>
<dbReference type="SMR" id="Q84TH9"/>
<dbReference type="BioGRID" id="13791">
    <property type="interactions" value="1"/>
</dbReference>
<dbReference type="FunCoup" id="Q84TH9">
    <property type="interactions" value="1098"/>
</dbReference>
<dbReference type="IntAct" id="Q84TH9">
    <property type="interactions" value="1"/>
</dbReference>
<dbReference type="STRING" id="3702.Q84TH9"/>
<dbReference type="iPTMnet" id="Q84TH9"/>
<dbReference type="PaxDb" id="3702-AT4G24020.1"/>
<dbReference type="ProteomicsDB" id="249441"/>
<dbReference type="EnsemblPlants" id="AT4G24020.1">
    <property type="protein sequence ID" value="AT4G24020.1"/>
    <property type="gene ID" value="AT4G24020"/>
</dbReference>
<dbReference type="GeneID" id="828502"/>
<dbReference type="Gramene" id="AT4G24020.1">
    <property type="protein sequence ID" value="AT4G24020.1"/>
    <property type="gene ID" value="AT4G24020"/>
</dbReference>
<dbReference type="KEGG" id="ath:AT4G24020"/>
<dbReference type="Araport" id="AT4G24020"/>
<dbReference type="TAIR" id="AT4G24020">
    <property type="gene designation" value="NLP7"/>
</dbReference>
<dbReference type="eggNOG" id="ENOG502QRQ2">
    <property type="taxonomic scope" value="Eukaryota"/>
</dbReference>
<dbReference type="HOGENOM" id="CLU_008971_0_0_1"/>
<dbReference type="InParanoid" id="Q84TH9"/>
<dbReference type="OMA" id="IWAPVKN"/>
<dbReference type="OrthoDB" id="6270329at2759"/>
<dbReference type="PhylomeDB" id="Q84TH9"/>
<dbReference type="PRO" id="PR:Q84TH9"/>
<dbReference type="Proteomes" id="UP000006548">
    <property type="component" value="Chromosome 4"/>
</dbReference>
<dbReference type="ExpressionAtlas" id="Q84TH9">
    <property type="expression patterns" value="baseline and differential"/>
</dbReference>
<dbReference type="GO" id="GO:0005634">
    <property type="term" value="C:nucleus"/>
    <property type="evidence" value="ECO:0000314"/>
    <property type="project" value="TAIR"/>
</dbReference>
<dbReference type="GO" id="GO:0001046">
    <property type="term" value="F:core promoter sequence-specific DNA binding"/>
    <property type="evidence" value="ECO:0000353"/>
    <property type="project" value="TAIR"/>
</dbReference>
<dbReference type="GO" id="GO:0003700">
    <property type="term" value="F:DNA-binding transcription factor activity"/>
    <property type="evidence" value="ECO:0000250"/>
    <property type="project" value="TAIR"/>
</dbReference>
<dbReference type="GO" id="GO:0000976">
    <property type="term" value="F:transcription cis-regulatory region binding"/>
    <property type="evidence" value="ECO:0000353"/>
    <property type="project" value="TAIR"/>
</dbReference>
<dbReference type="GO" id="GO:0042128">
    <property type="term" value="P:nitrate assimilation"/>
    <property type="evidence" value="ECO:0000315"/>
    <property type="project" value="TAIR"/>
</dbReference>
<dbReference type="GO" id="GO:0010167">
    <property type="term" value="P:response to nitrate"/>
    <property type="evidence" value="ECO:0000315"/>
    <property type="project" value="TAIR"/>
</dbReference>
<dbReference type="GO" id="GO:0009414">
    <property type="term" value="P:response to water deprivation"/>
    <property type="evidence" value="ECO:0000315"/>
    <property type="project" value="TAIR"/>
</dbReference>
<dbReference type="GO" id="GO:0010118">
    <property type="term" value="P:stomatal movement"/>
    <property type="evidence" value="ECO:0000315"/>
    <property type="project" value="TAIR"/>
</dbReference>
<dbReference type="CDD" id="cd06407">
    <property type="entry name" value="PB1_NLP"/>
    <property type="match status" value="1"/>
</dbReference>
<dbReference type="FunFam" id="3.10.20.90:FF:000186">
    <property type="entry name" value="RWP-RK domain-containing protein"/>
    <property type="match status" value="1"/>
</dbReference>
<dbReference type="Gene3D" id="3.10.20.90">
    <property type="entry name" value="Phosphatidylinositol 3-kinase Catalytic Subunit, Chain A, domain 1"/>
    <property type="match status" value="1"/>
</dbReference>
<dbReference type="InterPro" id="IPR045012">
    <property type="entry name" value="NLP"/>
</dbReference>
<dbReference type="InterPro" id="IPR055081">
    <property type="entry name" value="NLP1-9_GAF"/>
</dbReference>
<dbReference type="InterPro" id="IPR053793">
    <property type="entry name" value="PB1-like"/>
</dbReference>
<dbReference type="InterPro" id="IPR000270">
    <property type="entry name" value="PB1_dom"/>
</dbReference>
<dbReference type="InterPro" id="IPR034891">
    <property type="entry name" value="PB1_NLP"/>
</dbReference>
<dbReference type="InterPro" id="IPR003035">
    <property type="entry name" value="RWP-RK_dom"/>
</dbReference>
<dbReference type="PANTHER" id="PTHR32002:SF33">
    <property type="entry name" value="PROTEIN NLP7"/>
    <property type="match status" value="1"/>
</dbReference>
<dbReference type="PANTHER" id="PTHR32002">
    <property type="entry name" value="PROTEIN NLP8"/>
    <property type="match status" value="1"/>
</dbReference>
<dbReference type="Pfam" id="PF22922">
    <property type="entry name" value="GAF_NLP"/>
    <property type="match status" value="1"/>
</dbReference>
<dbReference type="Pfam" id="PF00564">
    <property type="entry name" value="PB1"/>
    <property type="match status" value="1"/>
</dbReference>
<dbReference type="Pfam" id="PF02042">
    <property type="entry name" value="RWP-RK"/>
    <property type="match status" value="1"/>
</dbReference>
<dbReference type="SMART" id="SM00666">
    <property type="entry name" value="PB1"/>
    <property type="match status" value="1"/>
</dbReference>
<dbReference type="SUPFAM" id="SSF54277">
    <property type="entry name" value="CAD &amp; PB1 domains"/>
    <property type="match status" value="1"/>
</dbReference>
<dbReference type="SUPFAM" id="SSF55781">
    <property type="entry name" value="GAF domain-like"/>
    <property type="match status" value="1"/>
</dbReference>
<dbReference type="PROSITE" id="PS51745">
    <property type="entry name" value="PB1"/>
    <property type="match status" value="1"/>
</dbReference>
<dbReference type="PROSITE" id="PS51519">
    <property type="entry name" value="RWP_RK"/>
    <property type="match status" value="1"/>
</dbReference>
<sequence>MCEPDDNSARNGVTTQPSRSRELLMDVDDLDLDGSWPLDQIPYLSSSNRMISPIFVSSSSEQPCSPLWAFSDGGGNGFHHATSGGDDEKISSVSGVPSFRLAEYPLFLPYSSPSAAENTTEKHNSFQFPSPLMSLVPPENTDNYCVIKERMTQALRYFKESTEQHVLAQVWAPVRKNGRDLLTTLGQPFVLNPNGNGLNQYRMISLTYMFSVDSESDVELGLPGRVFRQKLPEWTPNVQYYSSKEFSRLDHALHYNVRGTLALPVFNPSGQSCIGVVELIMTSEKIHYAPEVDKVCKALEAVNLKSSEILDHQTTQICNESRQNALAEILEVLTVVCETHNLPLAQTWVPCQHGSVLANGGGLKKNCTSFDGSCMGQICMSTTDMACYVVDAHVWGFRDACLEHHLQKGQGVAGRAFLNGGSCFCRDITKFCKTQYPLVHYALMFKLTTCFAISLQSSYTGDDSYILEFFLPSSITDDQEQDLLLGSILVTMKEHFQSLRVASGVDFGEDDDKLSFEIIQALPDKKVHSKIESIRVPFSGFKSNATETMLIPQPVVQSSDPVNEKINVATVNGVVKEKKKTEKKRGKTEKTISLDVLQQYFTGSLKDAAKSLGVCPTTMKRICRQHGISRWPSRKIKKVNRSITKLKRVIESVQGTDGGLDLTSMAVSSIPWTHGQTSAQPLNSPNGSKPPELPNTNNSPNHWSSDHSPNEPNGSPELPPSNGHKRSRTVDESAGTPTSHGSCDGNQLDEPKVPNQDPLFTVGGSPGLLFPPYSRDHDVSAASFAMPNRLLGSIDHFRGMLIEDAGSSKDLRNLCPTAAFDDKFQDTNWMNNDNNSNNNLYAPPKEEAIANVACEPSGSEMRTVTIKASYKDDIIRFRISSGSGIMELKDEVAKRLKVDAGTFDIKYLDDDNEWVLIACDADLQECLEIPRSSRTKIVRLLVHDVTTNLGSSCESTGEL</sequence>
<proteinExistence type="evidence at protein level"/>
<gene>
    <name type="primary">NLP7</name>
    <name type="ordered locus">At4g24020</name>
    <name type="ORF">T19F6.16</name>
</gene>
<reference key="1">
    <citation type="journal article" date="1999" name="Nature">
        <title>Sequence and analysis of chromosome 4 of the plant Arabidopsis thaliana.</title>
        <authorList>
            <person name="Mayer K.F.X."/>
            <person name="Schueller C."/>
            <person name="Wambutt R."/>
            <person name="Murphy G."/>
            <person name="Volckaert G."/>
            <person name="Pohl T."/>
            <person name="Duesterhoeft A."/>
            <person name="Stiekema W."/>
            <person name="Entian K.-D."/>
            <person name="Terryn N."/>
            <person name="Harris B."/>
            <person name="Ansorge W."/>
            <person name="Brandt P."/>
            <person name="Grivell L.A."/>
            <person name="Rieger M."/>
            <person name="Weichselgartner M."/>
            <person name="de Simone V."/>
            <person name="Obermaier B."/>
            <person name="Mache R."/>
            <person name="Mueller M."/>
            <person name="Kreis M."/>
            <person name="Delseny M."/>
            <person name="Puigdomenech P."/>
            <person name="Watson M."/>
            <person name="Schmidtheini T."/>
            <person name="Reichert B."/>
            <person name="Portetelle D."/>
            <person name="Perez-Alonso M."/>
            <person name="Boutry M."/>
            <person name="Bancroft I."/>
            <person name="Vos P."/>
            <person name="Hoheisel J."/>
            <person name="Zimmermann W."/>
            <person name="Wedler H."/>
            <person name="Ridley P."/>
            <person name="Langham S.-A."/>
            <person name="McCullagh B."/>
            <person name="Bilham L."/>
            <person name="Robben J."/>
            <person name="van der Schueren J."/>
            <person name="Grymonprez B."/>
            <person name="Chuang Y.-J."/>
            <person name="Vandenbussche F."/>
            <person name="Braeken M."/>
            <person name="Weltjens I."/>
            <person name="Voet M."/>
            <person name="Bastiaens I."/>
            <person name="Aert R."/>
            <person name="Defoor E."/>
            <person name="Weitzenegger T."/>
            <person name="Bothe G."/>
            <person name="Ramsperger U."/>
            <person name="Hilbert H."/>
            <person name="Braun M."/>
            <person name="Holzer E."/>
            <person name="Brandt A."/>
            <person name="Peters S."/>
            <person name="van Staveren M."/>
            <person name="Dirkse W."/>
            <person name="Mooijman P."/>
            <person name="Klein Lankhorst R."/>
            <person name="Rose M."/>
            <person name="Hauf J."/>
            <person name="Koetter P."/>
            <person name="Berneiser S."/>
            <person name="Hempel S."/>
            <person name="Feldpausch M."/>
            <person name="Lamberth S."/>
            <person name="Van den Daele H."/>
            <person name="De Keyser A."/>
            <person name="Buysshaert C."/>
            <person name="Gielen J."/>
            <person name="Villarroel R."/>
            <person name="De Clercq R."/>
            <person name="van Montagu M."/>
            <person name="Rogers J."/>
            <person name="Cronin A."/>
            <person name="Quail M.A."/>
            <person name="Bray-Allen S."/>
            <person name="Clark L."/>
            <person name="Doggett J."/>
            <person name="Hall S."/>
            <person name="Kay M."/>
            <person name="Lennard N."/>
            <person name="McLay K."/>
            <person name="Mayes R."/>
            <person name="Pettett A."/>
            <person name="Rajandream M.A."/>
            <person name="Lyne M."/>
            <person name="Benes V."/>
            <person name="Rechmann S."/>
            <person name="Borkova D."/>
            <person name="Bloecker H."/>
            <person name="Scharfe M."/>
            <person name="Grimm M."/>
            <person name="Loehnert T.-H."/>
            <person name="Dose S."/>
            <person name="de Haan M."/>
            <person name="Maarse A.C."/>
            <person name="Schaefer M."/>
            <person name="Mueller-Auer S."/>
            <person name="Gabel C."/>
            <person name="Fuchs M."/>
            <person name="Fartmann B."/>
            <person name="Granderath K."/>
            <person name="Dauner D."/>
            <person name="Herzl A."/>
            <person name="Neumann S."/>
            <person name="Argiriou A."/>
            <person name="Vitale D."/>
            <person name="Liguori R."/>
            <person name="Piravandi E."/>
            <person name="Massenet O."/>
            <person name="Quigley F."/>
            <person name="Clabauld G."/>
            <person name="Muendlein A."/>
            <person name="Felber R."/>
            <person name="Schnabl S."/>
            <person name="Hiller R."/>
            <person name="Schmidt W."/>
            <person name="Lecharny A."/>
            <person name="Aubourg S."/>
            <person name="Chefdor F."/>
            <person name="Cooke R."/>
            <person name="Berger C."/>
            <person name="Monfort A."/>
            <person name="Casacuberta E."/>
            <person name="Gibbons T."/>
            <person name="Weber N."/>
            <person name="Vandenbol M."/>
            <person name="Bargues M."/>
            <person name="Terol J."/>
            <person name="Torres A."/>
            <person name="Perez-Perez A."/>
            <person name="Purnelle B."/>
            <person name="Bent E."/>
            <person name="Johnson S."/>
            <person name="Tacon D."/>
            <person name="Jesse T."/>
            <person name="Heijnen L."/>
            <person name="Schwarz S."/>
            <person name="Scholler P."/>
            <person name="Heber S."/>
            <person name="Francs P."/>
            <person name="Bielke C."/>
            <person name="Frishman D."/>
            <person name="Haase D."/>
            <person name="Lemcke K."/>
            <person name="Mewes H.-W."/>
            <person name="Stocker S."/>
            <person name="Zaccaria P."/>
            <person name="Bevan M."/>
            <person name="Wilson R.K."/>
            <person name="de la Bastide M."/>
            <person name="Habermann K."/>
            <person name="Parnell L."/>
            <person name="Dedhia N."/>
            <person name="Gnoj L."/>
            <person name="Schutz K."/>
            <person name="Huang E."/>
            <person name="Spiegel L."/>
            <person name="Sekhon M."/>
            <person name="Murray J."/>
            <person name="Sheet P."/>
            <person name="Cordes M."/>
            <person name="Abu-Threideh J."/>
            <person name="Stoneking T."/>
            <person name="Kalicki J."/>
            <person name="Graves T."/>
            <person name="Harmon G."/>
            <person name="Edwards J."/>
            <person name="Latreille P."/>
            <person name="Courtney L."/>
            <person name="Cloud J."/>
            <person name="Abbott A."/>
            <person name="Scott K."/>
            <person name="Johnson D."/>
            <person name="Minx P."/>
            <person name="Bentley D."/>
            <person name="Fulton B."/>
            <person name="Miller N."/>
            <person name="Greco T."/>
            <person name="Kemp K."/>
            <person name="Kramer J."/>
            <person name="Fulton L."/>
            <person name="Mardis E."/>
            <person name="Dante M."/>
            <person name="Pepin K."/>
            <person name="Hillier L.W."/>
            <person name="Nelson J."/>
            <person name="Spieth J."/>
            <person name="Ryan E."/>
            <person name="Andrews S."/>
            <person name="Geisel C."/>
            <person name="Layman D."/>
            <person name="Du H."/>
            <person name="Ali J."/>
            <person name="Berghoff A."/>
            <person name="Jones K."/>
            <person name="Drone K."/>
            <person name="Cotton M."/>
            <person name="Joshu C."/>
            <person name="Antonoiu B."/>
            <person name="Zidanic M."/>
            <person name="Strong C."/>
            <person name="Sun H."/>
            <person name="Lamar B."/>
            <person name="Yordan C."/>
            <person name="Ma P."/>
            <person name="Zhong J."/>
            <person name="Preston R."/>
            <person name="Vil D."/>
            <person name="Shekher M."/>
            <person name="Matero A."/>
            <person name="Shah R."/>
            <person name="Swaby I.K."/>
            <person name="O'Shaughnessy A."/>
            <person name="Rodriguez M."/>
            <person name="Hoffman J."/>
            <person name="Till S."/>
            <person name="Granat S."/>
            <person name="Shohdy N."/>
            <person name="Hasegawa A."/>
            <person name="Hameed A."/>
            <person name="Lodhi M."/>
            <person name="Johnson A."/>
            <person name="Chen E."/>
            <person name="Marra M.A."/>
            <person name="Martienssen R."/>
            <person name="McCombie W.R."/>
        </authorList>
    </citation>
    <scope>NUCLEOTIDE SEQUENCE [LARGE SCALE GENOMIC DNA]</scope>
    <source>
        <strain>cv. Columbia</strain>
    </source>
</reference>
<reference key="2">
    <citation type="journal article" date="2017" name="Plant J.">
        <title>Araport11: a complete reannotation of the Arabidopsis thaliana reference genome.</title>
        <authorList>
            <person name="Cheng C.Y."/>
            <person name="Krishnakumar V."/>
            <person name="Chan A.P."/>
            <person name="Thibaud-Nissen F."/>
            <person name="Schobel S."/>
            <person name="Town C.D."/>
        </authorList>
    </citation>
    <scope>GENOME REANNOTATION</scope>
    <source>
        <strain>cv. Columbia</strain>
    </source>
</reference>
<reference key="3">
    <citation type="journal article" date="2003" name="Science">
        <title>Empirical analysis of transcriptional activity in the Arabidopsis genome.</title>
        <authorList>
            <person name="Yamada K."/>
            <person name="Lim J."/>
            <person name="Dale J.M."/>
            <person name="Chen H."/>
            <person name="Shinn P."/>
            <person name="Palm C.J."/>
            <person name="Southwick A.M."/>
            <person name="Wu H.C."/>
            <person name="Kim C.J."/>
            <person name="Nguyen M."/>
            <person name="Pham P.K."/>
            <person name="Cheuk R.F."/>
            <person name="Karlin-Newmann G."/>
            <person name="Liu S.X."/>
            <person name="Lam B."/>
            <person name="Sakano H."/>
            <person name="Wu T."/>
            <person name="Yu G."/>
            <person name="Miranda M."/>
            <person name="Quach H.L."/>
            <person name="Tripp M."/>
            <person name="Chang C.H."/>
            <person name="Lee J.M."/>
            <person name="Toriumi M.J."/>
            <person name="Chan M.M."/>
            <person name="Tang C.C."/>
            <person name="Onodera C.S."/>
            <person name="Deng J.M."/>
            <person name="Akiyama K."/>
            <person name="Ansari Y."/>
            <person name="Arakawa T."/>
            <person name="Banh J."/>
            <person name="Banno F."/>
            <person name="Bowser L."/>
            <person name="Brooks S.Y."/>
            <person name="Carninci P."/>
            <person name="Chao Q."/>
            <person name="Choy N."/>
            <person name="Enju A."/>
            <person name="Goldsmith A.D."/>
            <person name="Gurjal M."/>
            <person name="Hansen N.F."/>
            <person name="Hayashizaki Y."/>
            <person name="Johnson-Hopson C."/>
            <person name="Hsuan V.W."/>
            <person name="Iida K."/>
            <person name="Karnes M."/>
            <person name="Khan S."/>
            <person name="Koesema E."/>
            <person name="Ishida J."/>
            <person name="Jiang P.X."/>
            <person name="Jones T."/>
            <person name="Kawai J."/>
            <person name="Kamiya A."/>
            <person name="Meyers C."/>
            <person name="Nakajima M."/>
            <person name="Narusaka M."/>
            <person name="Seki M."/>
            <person name="Sakurai T."/>
            <person name="Satou M."/>
            <person name="Tamse R."/>
            <person name="Vaysberg M."/>
            <person name="Wallender E.K."/>
            <person name="Wong C."/>
            <person name="Yamamura Y."/>
            <person name="Yuan S."/>
            <person name="Shinozaki K."/>
            <person name="Davis R.W."/>
            <person name="Theologis A."/>
            <person name="Ecker J.R."/>
        </authorList>
    </citation>
    <scope>NUCLEOTIDE SEQUENCE [LARGE SCALE MRNA]</scope>
    <source>
        <strain>cv. Columbia</strain>
    </source>
</reference>
<reference key="4">
    <citation type="submission" date="2006-07" db="EMBL/GenBank/DDBJ databases">
        <title>Large-scale analysis of RIKEN Arabidopsis full-length (RAFL) cDNAs.</title>
        <authorList>
            <person name="Totoki Y."/>
            <person name="Seki M."/>
            <person name="Ishida J."/>
            <person name="Nakajima M."/>
            <person name="Enju A."/>
            <person name="Kamiya A."/>
            <person name="Narusaka M."/>
            <person name="Shin-i T."/>
            <person name="Nakagawa M."/>
            <person name="Sakamoto N."/>
            <person name="Oishi K."/>
            <person name="Kohara Y."/>
            <person name="Kobayashi M."/>
            <person name="Toyoda A."/>
            <person name="Sakaki Y."/>
            <person name="Sakurai T."/>
            <person name="Iida K."/>
            <person name="Akiyama K."/>
            <person name="Satou M."/>
            <person name="Toyoda T."/>
            <person name="Konagaya A."/>
            <person name="Carninci P."/>
            <person name="Kawai J."/>
            <person name="Hayashizaki Y."/>
            <person name="Shinozaki K."/>
        </authorList>
    </citation>
    <scope>NUCLEOTIDE SEQUENCE [LARGE SCALE MRNA]</scope>
    <source>
        <strain>cv. Columbia</strain>
    </source>
</reference>
<reference key="5">
    <citation type="journal article" date="2005" name="J. Mol. Evol.">
        <title>Evolution of NIN-like proteins in Arabidopsis, rice, and Lotus japonicus.</title>
        <authorList>
            <person name="Schauser L."/>
            <person name="Wieloch W."/>
            <person name="Stougaard J."/>
        </authorList>
    </citation>
    <scope>GENE FAMILY</scope>
    <scope>NOMENCLATURE</scope>
</reference>
<reference key="6">
    <citation type="journal article" date="2009" name="Plant J.">
        <title>The nodule inception-like protein 7 modulates nitrate sensing and metabolism in Arabidopsis.</title>
        <authorList>
            <person name="Castaings L."/>
            <person name="Camargo A."/>
            <person name="Pocholle D."/>
            <person name="Gaudon V."/>
            <person name="Texier Y."/>
            <person name="Boutet-Mercey S."/>
            <person name="Taconnat L."/>
            <person name="Renou J.P."/>
            <person name="Daniel-Vedele F."/>
            <person name="Fernandez E."/>
            <person name="Meyer C."/>
            <person name="Krapp A."/>
        </authorList>
    </citation>
    <scope>FUNCTION</scope>
    <scope>DISRUPTION PHENOTYPE</scope>
    <scope>TISSUE SPECIFICITY</scope>
    <scope>SUBCELLULAR LOCATION</scope>
    <scope>INDUCTION BY NITRATE</scope>
</reference>
<reference key="7">
    <citation type="journal article" date="2009" name="Plant Physiol.">
        <title>A genetic screen for nitrate regulatory mutants captures the nitrate transporter gene NRT1.1.</title>
        <authorList>
            <person name="Wang R."/>
            <person name="Xing X."/>
            <person name="Wang Y."/>
            <person name="Tran A."/>
            <person name="Crawford N.M."/>
        </authorList>
    </citation>
    <scope>MUTAGENESIS OF PRO-223</scope>
</reference>
<reference key="8">
    <citation type="journal article" date="2016" name="Plant Cell">
        <title>The Arabidopsis NRG2 protein mediates nitrate signaling and interacts with and regulates key nitrate regulators.</title>
        <authorList>
            <person name="Xu N."/>
            <person name="Wang R."/>
            <person name="Zhao L."/>
            <person name="Zhang C."/>
            <person name="Li Z."/>
            <person name="Lei Z."/>
            <person name="Liu F."/>
            <person name="Guan P."/>
            <person name="Chu Z."/>
            <person name="Crawford N.M."/>
            <person name="Wang Y."/>
        </authorList>
    </citation>
    <scope>INTERACTION WITH NRG2</scope>
    <scope>SUBCELLULAR LOCATION</scope>
</reference>
<feature type="chain" id="PRO_0000401492" description="Protein NLP7">
    <location>
        <begin position="1"/>
        <end position="959"/>
    </location>
</feature>
<feature type="domain" description="RWP-RK" evidence="2">
    <location>
        <begin position="578"/>
        <end position="659"/>
    </location>
</feature>
<feature type="domain" description="PB1" evidence="3">
    <location>
        <begin position="863"/>
        <end position="945"/>
    </location>
</feature>
<feature type="region of interest" description="Disordered" evidence="4">
    <location>
        <begin position="1"/>
        <end position="22"/>
    </location>
</feature>
<feature type="region of interest" description="Disordered" evidence="4">
    <location>
        <begin position="673"/>
        <end position="760"/>
    </location>
</feature>
<feature type="coiled-coil region" evidence="1">
    <location>
        <begin position="633"/>
        <end position="654"/>
    </location>
</feature>
<feature type="compositionally biased region" description="Polar residues" evidence="4">
    <location>
        <begin position="9"/>
        <end position="18"/>
    </location>
</feature>
<feature type="compositionally biased region" description="Polar residues" evidence="4">
    <location>
        <begin position="673"/>
        <end position="687"/>
    </location>
</feature>
<feature type="compositionally biased region" description="Polar residues" evidence="4">
    <location>
        <begin position="694"/>
        <end position="703"/>
    </location>
</feature>
<feature type="compositionally biased region" description="Polar residues" evidence="4">
    <location>
        <begin position="735"/>
        <end position="745"/>
    </location>
</feature>
<feature type="mutagenesis site" description="In Mut164; loss of nitrate sensing." evidence="6">
    <original>P</original>
    <variation>S</variation>
    <location>
        <position position="223"/>
    </location>
</feature>
<feature type="sequence conflict" description="In Ref. 3; AAO64180 and 4; BAF00379." evidence="8" ref="3 4">
    <original>K</original>
    <variation>E</variation>
    <location>
        <position position="525"/>
    </location>
</feature>
<keyword id="KW-0175">Coiled coil</keyword>
<keyword id="KW-0238">DNA-binding</keyword>
<keyword id="KW-0539">Nucleus</keyword>
<keyword id="KW-1185">Reference proteome</keyword>
<keyword id="KW-0804">Transcription</keyword>
<keyword id="KW-0805">Transcription regulation</keyword>
<comment type="function">
    <text evidence="5">Transcription factor involved in regulation of nitrate assimilation and in transduction of the nitrate signal.</text>
</comment>
<comment type="subunit">
    <text evidence="7">Interacts with NRG2.</text>
</comment>
<comment type="subcellular location">
    <subcellularLocation>
        <location evidence="2 5 7">Nucleus</location>
    </subcellularLocation>
</comment>
<comment type="tissue specificity">
    <text evidence="5">Expressed in roots, stems, leaves, flowers and siliques. Detected in root hairs, emerging secondary roots, vascular tissues, leaf parenchyma cells and stomata.</text>
</comment>
<comment type="induction">
    <text evidence="5">Not regulated by the N source or by nitrate.</text>
</comment>
<comment type="disruption phenotype">
    <text evidence="5">N-starvation phenotype. Smaller rosette, but no effects on roots. Delayed growth and flowering when grown in greenhouse. Increased drought resistance.</text>
</comment>